<protein>
    <recommendedName>
        <fullName evidence="1">Ribosome maturation factor RimP</fullName>
    </recommendedName>
</protein>
<gene>
    <name evidence="1" type="primary">rimP</name>
    <name type="ordered locus">BceJ2315_14710</name>
    <name type="ORF">BCAL1505</name>
</gene>
<comment type="function">
    <text evidence="1">Required for maturation of 30S ribosomal subunits.</text>
</comment>
<comment type="subcellular location">
    <subcellularLocation>
        <location evidence="1">Cytoplasm</location>
    </subcellularLocation>
</comment>
<comment type="similarity">
    <text evidence="1">Belongs to the RimP family.</text>
</comment>
<organism>
    <name type="scientific">Burkholderia cenocepacia (strain ATCC BAA-245 / DSM 16553 / LMG 16656 / NCTC 13227 / J2315 / CF5610)</name>
    <name type="common">Burkholderia cepacia (strain J2315)</name>
    <dbReference type="NCBI Taxonomy" id="216591"/>
    <lineage>
        <taxon>Bacteria</taxon>
        <taxon>Pseudomonadati</taxon>
        <taxon>Pseudomonadota</taxon>
        <taxon>Betaproteobacteria</taxon>
        <taxon>Burkholderiales</taxon>
        <taxon>Burkholderiaceae</taxon>
        <taxon>Burkholderia</taxon>
        <taxon>Burkholderia cepacia complex</taxon>
    </lineage>
</organism>
<sequence>MQLTELIETTVTGLGYELVELERTGRGMLCIYIDQPAGISLDDCEKVTRQLQHVLTVENIDYERLEVSSPGLDRPLKKLADFERFAGSEVSVTLKKPLDGRKTYRGILHAPNGETIGLEFEGKKGEAAMLDFTLADIDKARLIPQVDFRSRK</sequence>
<feature type="chain" id="PRO_1000136740" description="Ribosome maturation factor RimP">
    <location>
        <begin position="1"/>
        <end position="152"/>
    </location>
</feature>
<evidence type="ECO:0000255" key="1">
    <source>
        <dbReference type="HAMAP-Rule" id="MF_01077"/>
    </source>
</evidence>
<accession>B4E7K9</accession>
<dbReference type="EMBL" id="AM747720">
    <property type="protein sequence ID" value="CAR51804.1"/>
    <property type="molecule type" value="Genomic_DNA"/>
</dbReference>
<dbReference type="RefSeq" id="WP_006490686.1">
    <property type="nucleotide sequence ID" value="NC_011000.1"/>
</dbReference>
<dbReference type="SMR" id="B4E7K9"/>
<dbReference type="GeneID" id="56558029"/>
<dbReference type="KEGG" id="bcj:BCAL1505"/>
<dbReference type="eggNOG" id="COG0779">
    <property type="taxonomic scope" value="Bacteria"/>
</dbReference>
<dbReference type="HOGENOM" id="CLU_070525_1_0_4"/>
<dbReference type="BioCyc" id="BCEN216591:G1G1V-1674-MONOMER"/>
<dbReference type="Proteomes" id="UP000001035">
    <property type="component" value="Chromosome 1"/>
</dbReference>
<dbReference type="GO" id="GO:0005829">
    <property type="term" value="C:cytosol"/>
    <property type="evidence" value="ECO:0007669"/>
    <property type="project" value="TreeGrafter"/>
</dbReference>
<dbReference type="GO" id="GO:0000028">
    <property type="term" value="P:ribosomal small subunit assembly"/>
    <property type="evidence" value="ECO:0007669"/>
    <property type="project" value="TreeGrafter"/>
</dbReference>
<dbReference type="GO" id="GO:0006412">
    <property type="term" value="P:translation"/>
    <property type="evidence" value="ECO:0007669"/>
    <property type="project" value="TreeGrafter"/>
</dbReference>
<dbReference type="CDD" id="cd01734">
    <property type="entry name" value="YlxS_C"/>
    <property type="match status" value="1"/>
</dbReference>
<dbReference type="Gene3D" id="2.30.30.180">
    <property type="entry name" value="Ribosome maturation factor RimP, C-terminal domain"/>
    <property type="match status" value="1"/>
</dbReference>
<dbReference type="Gene3D" id="3.30.300.70">
    <property type="entry name" value="RimP-like superfamily, N-terminal"/>
    <property type="match status" value="1"/>
</dbReference>
<dbReference type="HAMAP" id="MF_01077">
    <property type="entry name" value="RimP"/>
    <property type="match status" value="1"/>
</dbReference>
<dbReference type="InterPro" id="IPR003728">
    <property type="entry name" value="Ribosome_maturation_RimP"/>
</dbReference>
<dbReference type="InterPro" id="IPR028998">
    <property type="entry name" value="RimP_C"/>
</dbReference>
<dbReference type="InterPro" id="IPR036847">
    <property type="entry name" value="RimP_C_sf"/>
</dbReference>
<dbReference type="InterPro" id="IPR028989">
    <property type="entry name" value="RimP_N"/>
</dbReference>
<dbReference type="InterPro" id="IPR035956">
    <property type="entry name" value="RimP_N_sf"/>
</dbReference>
<dbReference type="NCBIfam" id="NF000929">
    <property type="entry name" value="PRK00092.2-1"/>
    <property type="match status" value="1"/>
</dbReference>
<dbReference type="PANTHER" id="PTHR33867">
    <property type="entry name" value="RIBOSOME MATURATION FACTOR RIMP"/>
    <property type="match status" value="1"/>
</dbReference>
<dbReference type="PANTHER" id="PTHR33867:SF1">
    <property type="entry name" value="RIBOSOME MATURATION FACTOR RIMP"/>
    <property type="match status" value="1"/>
</dbReference>
<dbReference type="Pfam" id="PF17384">
    <property type="entry name" value="DUF150_C"/>
    <property type="match status" value="1"/>
</dbReference>
<dbReference type="Pfam" id="PF02576">
    <property type="entry name" value="RimP_N"/>
    <property type="match status" value="1"/>
</dbReference>
<dbReference type="SUPFAM" id="SSF74942">
    <property type="entry name" value="YhbC-like, C-terminal domain"/>
    <property type="match status" value="1"/>
</dbReference>
<dbReference type="SUPFAM" id="SSF75420">
    <property type="entry name" value="YhbC-like, N-terminal domain"/>
    <property type="match status" value="1"/>
</dbReference>
<proteinExistence type="inferred from homology"/>
<reference key="1">
    <citation type="journal article" date="2009" name="J. Bacteriol.">
        <title>The genome of Burkholderia cenocepacia J2315, an epidemic pathogen of cystic fibrosis patients.</title>
        <authorList>
            <person name="Holden M.T."/>
            <person name="Seth-Smith H.M."/>
            <person name="Crossman L.C."/>
            <person name="Sebaihia M."/>
            <person name="Bentley S.D."/>
            <person name="Cerdeno-Tarraga A.M."/>
            <person name="Thomson N.R."/>
            <person name="Bason N."/>
            <person name="Quail M.A."/>
            <person name="Sharp S."/>
            <person name="Cherevach I."/>
            <person name="Churcher C."/>
            <person name="Goodhead I."/>
            <person name="Hauser H."/>
            <person name="Holroyd N."/>
            <person name="Mungall K."/>
            <person name="Scott P."/>
            <person name="Walker D."/>
            <person name="White B."/>
            <person name="Rose H."/>
            <person name="Iversen P."/>
            <person name="Mil-Homens D."/>
            <person name="Rocha E.P."/>
            <person name="Fialho A.M."/>
            <person name="Baldwin A."/>
            <person name="Dowson C."/>
            <person name="Barrell B.G."/>
            <person name="Govan J.R."/>
            <person name="Vandamme P."/>
            <person name="Hart C.A."/>
            <person name="Mahenthiralingam E."/>
            <person name="Parkhill J."/>
        </authorList>
    </citation>
    <scope>NUCLEOTIDE SEQUENCE [LARGE SCALE GENOMIC DNA]</scope>
    <source>
        <strain>ATCC BAA-245 / DSM 16553 / LMG 16656 / NCTC 13227 / J2315 / CF5610</strain>
    </source>
</reference>
<keyword id="KW-0963">Cytoplasm</keyword>
<keyword id="KW-0690">Ribosome biogenesis</keyword>
<name>RIMP_BURCJ</name>